<gene>
    <name evidence="1" type="primary">thiG</name>
</gene>
<feature type="chain" id="PRO_0000162889" description="Thiazole synthase">
    <location>
        <begin position="1"/>
        <end position="277"/>
    </location>
</feature>
<feature type="active site" description="Schiff-base intermediate with DXP" evidence="1">
    <location>
        <position position="119"/>
    </location>
</feature>
<feature type="binding site" evidence="1">
    <location>
        <position position="180"/>
    </location>
    <ligand>
        <name>1-deoxy-D-xylulose 5-phosphate</name>
        <dbReference type="ChEBI" id="CHEBI:57792"/>
    </ligand>
</feature>
<feature type="binding site" evidence="1">
    <location>
        <begin position="206"/>
        <end position="207"/>
    </location>
    <ligand>
        <name>1-deoxy-D-xylulose 5-phosphate</name>
        <dbReference type="ChEBI" id="CHEBI:57792"/>
    </ligand>
</feature>
<feature type="binding site" evidence="1">
    <location>
        <begin position="228"/>
        <end position="229"/>
    </location>
    <ligand>
        <name>1-deoxy-D-xylulose 5-phosphate</name>
        <dbReference type="ChEBI" id="CHEBI:57792"/>
    </ligand>
</feature>
<name>THIG_PORPU</name>
<reference key="1">
    <citation type="journal article" date="1995" name="Plant Mol. Biol. Rep.">
        <title>Complete nucleotide sequence of the Porphyra purpurea chloroplast genome.</title>
        <authorList>
            <person name="Reith M.E."/>
            <person name="Munholland J."/>
        </authorList>
    </citation>
    <scope>NUCLEOTIDE SEQUENCE [LARGE SCALE GENOMIC DNA]</scope>
    <source>
        <strain>Avonport</strain>
    </source>
</reference>
<evidence type="ECO:0000255" key="1">
    <source>
        <dbReference type="HAMAP-Rule" id="MF_00443"/>
    </source>
</evidence>
<dbReference type="EC" id="2.8.1.10" evidence="1"/>
<dbReference type="EMBL" id="U38804">
    <property type="protein sequence ID" value="AAC08247.1"/>
    <property type="molecule type" value="Genomic_DNA"/>
</dbReference>
<dbReference type="PIR" id="S73282">
    <property type="entry name" value="S73282"/>
</dbReference>
<dbReference type="RefSeq" id="NP_053971.1">
    <property type="nucleotide sequence ID" value="NC_000925.1"/>
</dbReference>
<dbReference type="SMR" id="P51361"/>
<dbReference type="GeneID" id="810000"/>
<dbReference type="UniPathway" id="UPA00060"/>
<dbReference type="GO" id="GO:0009507">
    <property type="term" value="C:chloroplast"/>
    <property type="evidence" value="ECO:0007669"/>
    <property type="project" value="UniProtKB-SubCell"/>
</dbReference>
<dbReference type="GO" id="GO:1990107">
    <property type="term" value="F:thiazole synthase activity"/>
    <property type="evidence" value="ECO:0007669"/>
    <property type="project" value="UniProtKB-EC"/>
</dbReference>
<dbReference type="GO" id="GO:0009229">
    <property type="term" value="P:thiamine diphosphate biosynthetic process"/>
    <property type="evidence" value="ECO:0007669"/>
    <property type="project" value="UniProtKB-UniRule"/>
</dbReference>
<dbReference type="CDD" id="cd04728">
    <property type="entry name" value="ThiG"/>
    <property type="match status" value="1"/>
</dbReference>
<dbReference type="Gene3D" id="3.20.20.70">
    <property type="entry name" value="Aldolase class I"/>
    <property type="match status" value="1"/>
</dbReference>
<dbReference type="HAMAP" id="MF_00443">
    <property type="entry name" value="ThiG"/>
    <property type="match status" value="1"/>
</dbReference>
<dbReference type="InterPro" id="IPR013785">
    <property type="entry name" value="Aldolase_TIM"/>
</dbReference>
<dbReference type="InterPro" id="IPR033983">
    <property type="entry name" value="Thiazole_synthase_ThiG"/>
</dbReference>
<dbReference type="InterPro" id="IPR008867">
    <property type="entry name" value="ThiG"/>
</dbReference>
<dbReference type="PANTHER" id="PTHR34266">
    <property type="entry name" value="THIAZOLE SYNTHASE"/>
    <property type="match status" value="1"/>
</dbReference>
<dbReference type="PANTHER" id="PTHR34266:SF2">
    <property type="entry name" value="THIAZOLE SYNTHASE"/>
    <property type="match status" value="1"/>
</dbReference>
<dbReference type="Pfam" id="PF05690">
    <property type="entry name" value="ThiG"/>
    <property type="match status" value="1"/>
</dbReference>
<dbReference type="SUPFAM" id="SSF110399">
    <property type="entry name" value="ThiG-like"/>
    <property type="match status" value="1"/>
</dbReference>
<proteinExistence type="inferred from homology"/>
<protein>
    <recommendedName>
        <fullName evidence="1">Thiazole synthase</fullName>
        <ecNumber evidence="1">2.8.1.10</ecNumber>
    </recommendedName>
</protein>
<accession>P51361</accession>
<sequence length="277" mass="29717">MKPSFSLPHFVNDQLDQFKISDKSFSSRLMLGTGKYKNLQDAINSINVSGANIVTVAIRRAQNTKNLGRTNLIDGLDWSKLWILPNTAGCESAEEAVRIASLGQEIVKKLGQFDNNFIKLEVIPDSRYLLPDPIGTLKAAEYLINKGFVVMPYIGADPVLAKQLENIGCATVMPLASPIGSGKGLRNLLNLKIIIENAKIPVIIDAGIGTPSEAGKVMELGASAVLVNTAIARAKNSQTMARAMSLAVESGRLTYIAGRMPISEKAEPSSPILGISK</sequence>
<comment type="function">
    <text evidence="1">Catalyzes the rearrangement of 1-deoxy-D-xylulose 5-phosphate (DXP) to produce the thiazole phosphate moiety of thiamine. Sulfur is provided by the thiocarboxylate moiety of the carrier protein ThiS. In vitro, sulfur can be provided by H(2)S.</text>
</comment>
<comment type="catalytic activity">
    <reaction evidence="1">
        <text>[ThiS sulfur-carrier protein]-C-terminal-Gly-aminoethanethioate + 2-iminoacetate + 1-deoxy-D-xylulose 5-phosphate = [ThiS sulfur-carrier protein]-C-terminal Gly-Gly + 2-[(2R,5Z)-2-carboxy-4-methylthiazol-5(2H)-ylidene]ethyl phosphate + 2 H2O + H(+)</text>
        <dbReference type="Rhea" id="RHEA:26297"/>
        <dbReference type="Rhea" id="RHEA-COMP:12909"/>
        <dbReference type="Rhea" id="RHEA-COMP:19908"/>
        <dbReference type="ChEBI" id="CHEBI:15377"/>
        <dbReference type="ChEBI" id="CHEBI:15378"/>
        <dbReference type="ChEBI" id="CHEBI:57792"/>
        <dbReference type="ChEBI" id="CHEBI:62899"/>
        <dbReference type="ChEBI" id="CHEBI:77846"/>
        <dbReference type="ChEBI" id="CHEBI:90778"/>
        <dbReference type="ChEBI" id="CHEBI:232372"/>
        <dbReference type="EC" id="2.8.1.10"/>
    </reaction>
</comment>
<comment type="pathway">
    <text evidence="1">Cofactor biosynthesis; thiamine diphosphate biosynthesis.</text>
</comment>
<comment type="subunit">
    <text evidence="1">Homotetramer. Forms heterodimers with either ThiH or ThiS.</text>
</comment>
<comment type="subcellular location">
    <subcellularLocation>
        <location>Plastid</location>
        <location>Chloroplast</location>
    </subcellularLocation>
</comment>
<comment type="similarity">
    <text evidence="1">Belongs to the ThiG family.</text>
</comment>
<keyword id="KW-0150">Chloroplast</keyword>
<keyword id="KW-0934">Plastid</keyword>
<keyword id="KW-0704">Schiff base</keyword>
<keyword id="KW-0784">Thiamine biosynthesis</keyword>
<keyword id="KW-0808">Transferase</keyword>
<geneLocation type="chloroplast"/>
<organism>
    <name type="scientific">Porphyra purpurea</name>
    <name type="common">Red seaweed</name>
    <name type="synonym">Ulva purpurea</name>
    <dbReference type="NCBI Taxonomy" id="2787"/>
    <lineage>
        <taxon>Eukaryota</taxon>
        <taxon>Rhodophyta</taxon>
        <taxon>Bangiophyceae</taxon>
        <taxon>Bangiales</taxon>
        <taxon>Bangiaceae</taxon>
        <taxon>Porphyra</taxon>
    </lineage>
</organism>